<reference key="1">
    <citation type="journal article" date="2008" name="Genome Res.">
        <title>Comparative genome analysis of Salmonella enteritidis PT4 and Salmonella gallinarum 287/91 provides insights into evolutionary and host adaptation pathways.</title>
        <authorList>
            <person name="Thomson N.R."/>
            <person name="Clayton D.J."/>
            <person name="Windhorst D."/>
            <person name="Vernikos G."/>
            <person name="Davidson S."/>
            <person name="Churcher C."/>
            <person name="Quail M.A."/>
            <person name="Stevens M."/>
            <person name="Jones M.A."/>
            <person name="Watson M."/>
            <person name="Barron A."/>
            <person name="Layton A."/>
            <person name="Pickard D."/>
            <person name="Kingsley R.A."/>
            <person name="Bignell A."/>
            <person name="Clark L."/>
            <person name="Harris B."/>
            <person name="Ormond D."/>
            <person name="Abdellah Z."/>
            <person name="Brooks K."/>
            <person name="Cherevach I."/>
            <person name="Chillingworth T."/>
            <person name="Woodward J."/>
            <person name="Norberczak H."/>
            <person name="Lord A."/>
            <person name="Arrowsmith C."/>
            <person name="Jagels K."/>
            <person name="Moule S."/>
            <person name="Mungall K."/>
            <person name="Saunders M."/>
            <person name="Whitehead S."/>
            <person name="Chabalgoity J.A."/>
            <person name="Maskell D."/>
            <person name="Humphreys T."/>
            <person name="Roberts M."/>
            <person name="Barrow P.A."/>
            <person name="Dougan G."/>
            <person name="Parkhill J."/>
        </authorList>
    </citation>
    <scope>NUCLEOTIDE SEQUENCE [LARGE SCALE GENOMIC DNA]</scope>
    <source>
        <strain>P125109</strain>
    </source>
</reference>
<proteinExistence type="inferred from homology"/>
<evidence type="ECO:0000255" key="1">
    <source>
        <dbReference type="HAMAP-Rule" id="MF_00759"/>
    </source>
</evidence>
<comment type="function">
    <text evidence="1">Sequence-specific endonuclease that cleaves unmethylated GATC sequences. It is involved in DNA mismatch repair.</text>
</comment>
<comment type="subcellular location">
    <subcellularLocation>
        <location evidence="1">Cytoplasm</location>
    </subcellularLocation>
</comment>
<comment type="similarity">
    <text evidence="1">Belongs to the MutH family.</text>
</comment>
<sequence length="231" mass="25410">MSALCPLLTPPASEALLLAQARQLSGYTLGELAAMAGITTPKDLKRDKGWIGVLLEIWLGASAGSKPEQDFAALGVELKTIPVDSLGRPLETTFVCVAPLTGNSGVTWETSHVRHKLKRVLWVPVEGDRSIPLAERRVGSPLLWSPSEEEDRQLRLDWEELMDMIVLGQVERITARHGEVLQLRPKAANARALTEAIGARGEPILTLPRGFYLKKNFTQALLARHFLLQNP</sequence>
<keyword id="KW-0963">Cytoplasm</keyword>
<keyword id="KW-0227">DNA damage</keyword>
<keyword id="KW-0234">DNA repair</keyword>
<keyword id="KW-0255">Endonuclease</keyword>
<keyword id="KW-0378">Hydrolase</keyword>
<keyword id="KW-0540">Nuclease</keyword>
<name>MUTH_SALEP</name>
<accession>B5QWT7</accession>
<feature type="chain" id="PRO_1000133471" description="DNA mismatch repair protein MutH">
    <location>
        <begin position="1"/>
        <end position="231"/>
    </location>
</feature>
<gene>
    <name evidence="1" type="primary">mutH</name>
    <name type="ordered locus">SEN2848</name>
</gene>
<dbReference type="EMBL" id="AM933172">
    <property type="protein sequence ID" value="CAR34426.1"/>
    <property type="molecule type" value="Genomic_DNA"/>
</dbReference>
<dbReference type="RefSeq" id="WP_001274930.1">
    <property type="nucleotide sequence ID" value="NC_011294.1"/>
</dbReference>
<dbReference type="SMR" id="B5QWT7"/>
<dbReference type="KEGG" id="set:SEN2848"/>
<dbReference type="HOGENOM" id="CLU_086669_0_0_6"/>
<dbReference type="Proteomes" id="UP000000613">
    <property type="component" value="Chromosome"/>
</dbReference>
<dbReference type="GO" id="GO:0005737">
    <property type="term" value="C:cytoplasm"/>
    <property type="evidence" value="ECO:0007669"/>
    <property type="project" value="UniProtKB-SubCell"/>
</dbReference>
<dbReference type="GO" id="GO:0003677">
    <property type="term" value="F:DNA binding"/>
    <property type="evidence" value="ECO:0007669"/>
    <property type="project" value="InterPro"/>
</dbReference>
<dbReference type="GO" id="GO:0004519">
    <property type="term" value="F:endonuclease activity"/>
    <property type="evidence" value="ECO:0007669"/>
    <property type="project" value="UniProtKB-UniRule"/>
</dbReference>
<dbReference type="GO" id="GO:0006304">
    <property type="term" value="P:DNA modification"/>
    <property type="evidence" value="ECO:0007669"/>
    <property type="project" value="InterPro"/>
</dbReference>
<dbReference type="GO" id="GO:0006298">
    <property type="term" value="P:mismatch repair"/>
    <property type="evidence" value="ECO:0007669"/>
    <property type="project" value="UniProtKB-UniRule"/>
</dbReference>
<dbReference type="CDD" id="cd00583">
    <property type="entry name" value="MutH-like"/>
    <property type="match status" value="1"/>
</dbReference>
<dbReference type="FunFam" id="3.40.600.10:FF:000001">
    <property type="entry name" value="DNA mismatch repair protein MutH"/>
    <property type="match status" value="1"/>
</dbReference>
<dbReference type="Gene3D" id="3.40.600.10">
    <property type="entry name" value="DNA mismatch repair MutH/Restriction endonuclease, type II"/>
    <property type="match status" value="1"/>
</dbReference>
<dbReference type="HAMAP" id="MF_00759">
    <property type="entry name" value="MutH"/>
    <property type="match status" value="1"/>
</dbReference>
<dbReference type="InterPro" id="IPR004230">
    <property type="entry name" value="DNA_mismatch_repair_MutH"/>
</dbReference>
<dbReference type="InterPro" id="IPR011337">
    <property type="entry name" value="DNA_rep_MutH/RE_typeII_Sau3AI"/>
</dbReference>
<dbReference type="InterPro" id="IPR037057">
    <property type="entry name" value="DNA_rep_MutH/T2_RE_sf"/>
</dbReference>
<dbReference type="InterPro" id="IPR011335">
    <property type="entry name" value="Restrct_endonuc-II-like"/>
</dbReference>
<dbReference type="NCBIfam" id="TIGR02248">
    <property type="entry name" value="mutH_TIGR"/>
    <property type="match status" value="1"/>
</dbReference>
<dbReference type="NCBIfam" id="NF003458">
    <property type="entry name" value="PRK05070.1"/>
    <property type="match status" value="1"/>
</dbReference>
<dbReference type="Pfam" id="PF02976">
    <property type="entry name" value="MutH"/>
    <property type="match status" value="1"/>
</dbReference>
<dbReference type="SMART" id="SM00927">
    <property type="entry name" value="MutH"/>
    <property type="match status" value="1"/>
</dbReference>
<dbReference type="SUPFAM" id="SSF52980">
    <property type="entry name" value="Restriction endonuclease-like"/>
    <property type="match status" value="1"/>
</dbReference>
<protein>
    <recommendedName>
        <fullName evidence="1">DNA mismatch repair protein MutH</fullName>
    </recommendedName>
    <alternativeName>
        <fullName evidence="1">Methyl-directed mismatch repair protein</fullName>
    </alternativeName>
</protein>
<organism>
    <name type="scientific">Salmonella enteritidis PT4 (strain P125109)</name>
    <dbReference type="NCBI Taxonomy" id="550537"/>
    <lineage>
        <taxon>Bacteria</taxon>
        <taxon>Pseudomonadati</taxon>
        <taxon>Pseudomonadota</taxon>
        <taxon>Gammaproteobacteria</taxon>
        <taxon>Enterobacterales</taxon>
        <taxon>Enterobacteriaceae</taxon>
        <taxon>Salmonella</taxon>
    </lineage>
</organism>